<evidence type="ECO:0000255" key="1">
    <source>
        <dbReference type="HAMAP-Rule" id="MF_01923"/>
    </source>
</evidence>
<evidence type="ECO:0000256" key="2">
    <source>
        <dbReference type="SAM" id="MobiDB-lite"/>
    </source>
</evidence>
<evidence type="ECO:0000305" key="3">
    <source>
    </source>
</evidence>
<comment type="function">
    <text evidence="3">Catalyzes the carbon skeleton rearrangement of L-glutamate to L-threo-3-methylaspartate ((2S,3S)-3-methylaspartate).</text>
</comment>
<comment type="catalytic activity">
    <reaction evidence="1">
        <text>(2S,3S)-3-methyl-L-aspartate = L-glutamate</text>
        <dbReference type="Rhea" id="RHEA:12857"/>
        <dbReference type="ChEBI" id="CHEBI:29985"/>
        <dbReference type="ChEBI" id="CHEBI:58724"/>
        <dbReference type="EC" id="5.4.99.1"/>
    </reaction>
</comment>
<comment type="cofactor">
    <cofactor>
        <name>adenosylcob(III)alamin</name>
        <dbReference type="ChEBI" id="CHEBI:18408"/>
    </cofactor>
</comment>
<comment type="pathway">
    <text evidence="1">Amino-acid degradation; L-glutamate degradation via mesaconate pathway; acetate and pyruvate from L-glutamate: step 1/4.</text>
</comment>
<comment type="subunit">
    <text evidence="1">Heterotetramer composed of 2 epsilon subunits (GlmE) and 2 sigma subunits (GlmS). GlmE exists as a homodimer and GlmS as a monomer.</text>
</comment>
<comment type="similarity">
    <text evidence="1">Belongs to the methylaspartate mutase GlmE subunit family.</text>
</comment>
<keyword id="KW-0846">Cobalamin</keyword>
<keyword id="KW-0170">Cobalt</keyword>
<keyword id="KW-0413">Isomerase</keyword>
<keyword id="KW-1185">Reference proteome</keyword>
<gene>
    <name evidence="1" type="primary">glmE</name>
    <name type="synonym">mamB</name>
    <name type="ordered locus">rrnAC0685</name>
</gene>
<organism>
    <name type="scientific">Haloarcula marismortui (strain ATCC 43049 / DSM 3752 / JCM 8966 / VKM B-1809)</name>
    <name type="common">Halobacterium marismortui</name>
    <dbReference type="NCBI Taxonomy" id="272569"/>
    <lineage>
        <taxon>Archaea</taxon>
        <taxon>Methanobacteriati</taxon>
        <taxon>Methanobacteriota</taxon>
        <taxon>Stenosarchaea group</taxon>
        <taxon>Halobacteria</taxon>
        <taxon>Halobacteriales</taxon>
        <taxon>Haloarculaceae</taxon>
        <taxon>Haloarcula</taxon>
    </lineage>
</organism>
<feature type="chain" id="PRO_0000429441" description="Glutamate mutase epsilon subunit">
    <location>
        <begin position="1"/>
        <end position="487"/>
    </location>
</feature>
<feature type="region of interest" description="Disordered" evidence="2">
    <location>
        <begin position="465"/>
        <end position="487"/>
    </location>
</feature>
<feature type="binding site" evidence="1">
    <location>
        <position position="62"/>
    </location>
    <ligand>
        <name>L-glutamate</name>
        <dbReference type="ChEBI" id="CHEBI:29985"/>
    </ligand>
</feature>
<feature type="binding site" evidence="1">
    <location>
        <position position="64"/>
    </location>
    <ligand>
        <name>adenosylcob(III)alamin</name>
        <dbReference type="ChEBI" id="CHEBI:18408"/>
    </ligand>
</feature>
<feature type="binding site" evidence="1">
    <location>
        <position position="96"/>
    </location>
    <ligand>
        <name>L-glutamate</name>
        <dbReference type="ChEBI" id="CHEBI:29985"/>
    </ligand>
</feature>
<feature type="binding site" evidence="1">
    <location>
        <position position="119"/>
    </location>
    <ligand>
        <name>adenosylcob(III)alamin</name>
        <dbReference type="ChEBI" id="CHEBI:18408"/>
    </ligand>
</feature>
<feature type="binding site" evidence="1">
    <location>
        <begin position="145"/>
        <end position="146"/>
    </location>
    <ligand>
        <name>L-glutamate</name>
        <dbReference type="ChEBI" id="CHEBI:29985"/>
    </ligand>
</feature>
<feature type="binding site" evidence="1">
    <location>
        <position position="167"/>
    </location>
    <ligand>
        <name>L-glutamate</name>
        <dbReference type="ChEBI" id="CHEBI:29985"/>
    </ligand>
</feature>
<feature type="binding site" evidence="1">
    <location>
        <position position="173"/>
    </location>
    <ligand>
        <name>L-glutamate</name>
        <dbReference type="ChEBI" id="CHEBI:29985"/>
    </ligand>
</feature>
<feature type="binding site" evidence="1">
    <location>
        <position position="176"/>
    </location>
    <ligand>
        <name>adenosylcob(III)alamin</name>
        <dbReference type="ChEBI" id="CHEBI:18408"/>
    </ligand>
</feature>
<feature type="binding site" evidence="1">
    <location>
        <position position="177"/>
    </location>
    <ligand>
        <name>L-glutamate</name>
        <dbReference type="ChEBI" id="CHEBI:29985"/>
    </ligand>
</feature>
<feature type="binding site" evidence="1">
    <location>
        <position position="289"/>
    </location>
    <ligand>
        <name>adenosylcob(III)alamin</name>
        <dbReference type="ChEBI" id="CHEBI:18408"/>
    </ligand>
</feature>
<feature type="binding site" evidence="1">
    <location>
        <position position="318"/>
    </location>
    <ligand>
        <name>adenosylcob(III)alamin</name>
        <dbReference type="ChEBI" id="CHEBI:18408"/>
    </ligand>
</feature>
<feature type="binding site" evidence="1">
    <location>
        <position position="322"/>
    </location>
    <ligand>
        <name>adenosylcob(III)alamin</name>
        <dbReference type="ChEBI" id="CHEBI:18408"/>
    </ligand>
</feature>
<dbReference type="EC" id="5.4.99.1" evidence="1"/>
<dbReference type="EMBL" id="AY596297">
    <property type="protein sequence ID" value="AAV45686.1"/>
    <property type="molecule type" value="Genomic_DNA"/>
</dbReference>
<dbReference type="RefSeq" id="WP_007190471.1">
    <property type="nucleotide sequence ID" value="NZ_CP039138.1"/>
</dbReference>
<dbReference type="SMR" id="Q5V466"/>
<dbReference type="STRING" id="272569.rrnAC0685"/>
<dbReference type="PaxDb" id="272569-rrnAC0685"/>
<dbReference type="EnsemblBacteria" id="AAV45686">
    <property type="protein sequence ID" value="AAV45686"/>
    <property type="gene ID" value="rrnAC0685"/>
</dbReference>
<dbReference type="KEGG" id="hma:rrnAC0685"/>
<dbReference type="PATRIC" id="fig|272569.17.peg.1435"/>
<dbReference type="eggNOG" id="arCOG06231">
    <property type="taxonomic scope" value="Archaea"/>
</dbReference>
<dbReference type="HOGENOM" id="CLU_029922_0_0_2"/>
<dbReference type="BioCyc" id="MetaCyc:MONOMER-16254"/>
<dbReference type="UniPathway" id="UPA00561">
    <property type="reaction ID" value="UER00617"/>
</dbReference>
<dbReference type="Proteomes" id="UP000001169">
    <property type="component" value="Chromosome I"/>
</dbReference>
<dbReference type="GO" id="GO:0031419">
    <property type="term" value="F:cobalamin binding"/>
    <property type="evidence" value="ECO:0007669"/>
    <property type="project" value="UniProtKB-KW"/>
</dbReference>
<dbReference type="GO" id="GO:0050097">
    <property type="term" value="F:methylaspartate mutase activity"/>
    <property type="evidence" value="ECO:0007669"/>
    <property type="project" value="UniProtKB-UniRule"/>
</dbReference>
<dbReference type="GO" id="GO:0019670">
    <property type="term" value="P:anaerobic glutamate catabolic process"/>
    <property type="evidence" value="ECO:0007669"/>
    <property type="project" value="InterPro"/>
</dbReference>
<dbReference type="GO" id="GO:0019553">
    <property type="term" value="P:glutamate catabolic process via L-citramalate"/>
    <property type="evidence" value="ECO:0007669"/>
    <property type="project" value="UniProtKB-UniRule"/>
</dbReference>
<dbReference type="CDD" id="cd00245">
    <property type="entry name" value="Glm_e"/>
    <property type="match status" value="1"/>
</dbReference>
<dbReference type="Gene3D" id="3.90.970.10">
    <property type="match status" value="1"/>
</dbReference>
<dbReference type="Gene3D" id="3.20.20.240">
    <property type="entry name" value="Methylmalonyl-CoA mutase"/>
    <property type="match status" value="1"/>
</dbReference>
<dbReference type="HAMAP" id="MF_01923">
    <property type="entry name" value="Me_Asp_mutase_E"/>
    <property type="match status" value="1"/>
</dbReference>
<dbReference type="InterPro" id="IPR016176">
    <property type="entry name" value="Cbl-dep_enz_cat"/>
</dbReference>
<dbReference type="InterPro" id="IPR006396">
    <property type="entry name" value="Glu_mut_E"/>
</dbReference>
<dbReference type="InterPro" id="IPR014714">
    <property type="entry name" value="Glu_mut_E_C_dom_sf"/>
</dbReference>
<dbReference type="NCBIfam" id="TIGR01503">
    <property type="entry name" value="MthylAspMut_E"/>
    <property type="match status" value="1"/>
</dbReference>
<dbReference type="Pfam" id="PF06368">
    <property type="entry name" value="Met_asp_mut_E"/>
    <property type="match status" value="1"/>
</dbReference>
<dbReference type="PIRSF" id="PIRSF001495">
    <property type="entry name" value="Met_asp_mut_epsi"/>
    <property type="match status" value="1"/>
</dbReference>
<dbReference type="SUPFAM" id="SSF51703">
    <property type="entry name" value="Cobalamin (vitamin B12)-dependent enzymes"/>
    <property type="match status" value="1"/>
</dbReference>
<proteinExistence type="inferred from homology"/>
<name>GLME_HALMA</name>
<protein>
    <recommendedName>
        <fullName evidence="1">Glutamate mutase epsilon subunit</fullName>
        <ecNumber evidence="1">5.4.99.1</ecNumber>
    </recommendedName>
    <alternativeName>
        <fullName evidence="1">Glutamate mutase E chain</fullName>
    </alternativeName>
    <alternativeName>
        <fullName evidence="1">Glutamate mutase large subunit</fullName>
    </alternativeName>
    <alternativeName>
        <fullName evidence="1">Methylaspartate mutase</fullName>
    </alternativeName>
</protein>
<reference key="1">
    <citation type="journal article" date="2004" name="Genome Res.">
        <title>Genome sequence of Haloarcula marismortui: a halophilic archaeon from the Dead Sea.</title>
        <authorList>
            <person name="Baliga N.S."/>
            <person name="Bonneau R."/>
            <person name="Facciotti M.T."/>
            <person name="Pan M."/>
            <person name="Glusman G."/>
            <person name="Deutsch E.W."/>
            <person name="Shannon P."/>
            <person name="Chiu Y."/>
            <person name="Weng R.S."/>
            <person name="Gan R.R."/>
            <person name="Hung P."/>
            <person name="Date S.V."/>
            <person name="Marcotte E."/>
            <person name="Hood L."/>
            <person name="Ng W.V."/>
        </authorList>
    </citation>
    <scope>NUCLEOTIDE SEQUENCE [LARGE SCALE GENOMIC DNA]</scope>
    <source>
        <strain>ATCC 43049 / DSM 3752 / JCM 8966 / VKM B-1809</strain>
    </source>
</reference>
<reference key="2">
    <citation type="journal article" date="2011" name="Science">
        <title>A methylaspartate cycle in haloarchaea.</title>
        <authorList>
            <person name="Khomyakova M."/>
            <person name="Bukmez O."/>
            <person name="Thomas L.K."/>
            <person name="Erb T.J."/>
            <person name="Berg I.A."/>
        </authorList>
    </citation>
    <scope>FUNCTION</scope>
    <source>
        <strain>ATCC 43049 / DSM 3752 / JCM 8966 / VKM B-1809</strain>
    </source>
</reference>
<sequence>MPTDERLSDDQLQRIANDLRDNWHTGREVDFEEAIAFHESLPASKQFAQVLESADQPLLQPRAGVPCLEEQIDLLRYLQDEGGADLLPTTIDSYTRDNEYEKAEEGLAASRGSDENELNGFPAVNHGVEDCRRLIRALDAPVEVRHGTPDARLLAMVTLAGGFQSFEGGPISYNIPYTKRHDLATTIEHWQFVDRLCGAYTERGVTINREPFGPLTGTLVPPSIAIAVMLVEGELAATQGVRSLTLGYGQVGNLVQDVAALRALRKLGNEYLRDEVTVTTVFHEWMGGFPPDEARANGVISLGGATAAVAQPDKVITKSAQEFQGVPTKEANAAGLRTTRQLIDMMIEQDIDLGGIDEEQALIERETRALMDAIYEAGDGDVAQGVINAFDSGALDVPFAPSDAAKGAVLPARDDDGRVRIFEFADLALPDDIKEIHAARLGERAETEGRDQSFRMVADDVDAISDGKLIGRPGGDNSPAGGASDAD</sequence>
<accession>Q5V466</accession>